<feature type="initiator methionine" description="Removed" evidence="3">
    <location>
        <position position="1"/>
    </location>
</feature>
<feature type="chain" id="PRO_0000058892" description="Serine/threonine-protein phosphatase PP-Z2">
    <location>
        <begin position="2"/>
        <end position="710"/>
    </location>
</feature>
<feature type="region of interest" description="Disordered" evidence="4">
    <location>
        <begin position="1"/>
        <end position="382"/>
    </location>
</feature>
<feature type="compositionally biased region" description="Basic and acidic residues" evidence="4">
    <location>
        <begin position="15"/>
        <end position="27"/>
    </location>
</feature>
<feature type="compositionally biased region" description="Low complexity" evidence="4">
    <location>
        <begin position="40"/>
        <end position="49"/>
    </location>
</feature>
<feature type="compositionally biased region" description="Polar residues" evidence="4">
    <location>
        <begin position="62"/>
        <end position="77"/>
    </location>
</feature>
<feature type="compositionally biased region" description="Polar residues" evidence="4">
    <location>
        <begin position="95"/>
        <end position="104"/>
    </location>
</feature>
<feature type="compositionally biased region" description="Low complexity" evidence="4">
    <location>
        <begin position="105"/>
        <end position="125"/>
    </location>
</feature>
<feature type="compositionally biased region" description="Low complexity" evidence="4">
    <location>
        <begin position="143"/>
        <end position="155"/>
    </location>
</feature>
<feature type="compositionally biased region" description="Acidic residues" evidence="4">
    <location>
        <begin position="160"/>
        <end position="172"/>
    </location>
</feature>
<feature type="compositionally biased region" description="Low complexity" evidence="4">
    <location>
        <begin position="247"/>
        <end position="260"/>
    </location>
</feature>
<feature type="compositionally biased region" description="Polar residues" evidence="4">
    <location>
        <begin position="261"/>
        <end position="273"/>
    </location>
</feature>
<feature type="compositionally biased region" description="Polar residues" evidence="4">
    <location>
        <begin position="291"/>
        <end position="302"/>
    </location>
</feature>
<feature type="active site" description="Proton donor" evidence="1">
    <location>
        <position position="515"/>
    </location>
</feature>
<feature type="binding site" evidence="1">
    <location>
        <position position="454"/>
    </location>
    <ligand>
        <name>Mn(2+)</name>
        <dbReference type="ChEBI" id="CHEBI:29035"/>
        <label>1</label>
    </ligand>
</feature>
<feature type="binding site" evidence="1">
    <location>
        <position position="456"/>
    </location>
    <ligand>
        <name>Mn(2+)</name>
        <dbReference type="ChEBI" id="CHEBI:29035"/>
        <label>1</label>
    </ligand>
</feature>
<feature type="binding site" evidence="1">
    <location>
        <position position="482"/>
    </location>
    <ligand>
        <name>Mn(2+)</name>
        <dbReference type="ChEBI" id="CHEBI:29035"/>
        <label>1</label>
    </ligand>
</feature>
<feature type="binding site" evidence="1">
    <location>
        <position position="482"/>
    </location>
    <ligand>
        <name>Mn(2+)</name>
        <dbReference type="ChEBI" id="CHEBI:29035"/>
        <label>2</label>
    </ligand>
</feature>
<feature type="binding site" evidence="1">
    <location>
        <position position="514"/>
    </location>
    <ligand>
        <name>Mn(2+)</name>
        <dbReference type="ChEBI" id="CHEBI:29035"/>
        <label>2</label>
    </ligand>
</feature>
<feature type="binding site" evidence="1">
    <location>
        <position position="563"/>
    </location>
    <ligand>
        <name>Mn(2+)</name>
        <dbReference type="ChEBI" id="CHEBI:29035"/>
        <label>2</label>
    </ligand>
</feature>
<feature type="binding site" evidence="1">
    <location>
        <position position="638"/>
    </location>
    <ligand>
        <name>Mn(2+)</name>
        <dbReference type="ChEBI" id="CHEBI:29035"/>
        <label>2</label>
    </ligand>
</feature>
<feature type="modified residue" description="Phosphoserine" evidence="2">
    <location>
        <position position="55"/>
    </location>
</feature>
<feature type="modified residue" description="Phosphoserine" evidence="8">
    <location>
        <position position="71"/>
    </location>
</feature>
<feature type="modified residue" description="Phosphothreonine" evidence="2">
    <location>
        <position position="161"/>
    </location>
</feature>
<feature type="modified residue" description="Phosphoserine" evidence="7">
    <location>
        <position position="203"/>
    </location>
</feature>
<feature type="modified residue" description="Phosphoserine" evidence="8">
    <location>
        <position position="224"/>
    </location>
</feature>
<feature type="modified residue" description="Phosphothreonine" evidence="2">
    <location>
        <position position="271"/>
    </location>
</feature>
<feature type="modified residue" description="Phosphoserine" evidence="2">
    <location>
        <position position="275"/>
    </location>
</feature>
<feature type="modified residue" description="Phosphoserine" evidence="8">
    <location>
        <position position="310"/>
    </location>
</feature>
<feature type="lipid moiety-binding region" description="N-myristoyl glycine" evidence="3">
    <location>
        <position position="2"/>
    </location>
</feature>
<feature type="sequence conflict" description="In Ref. 1; AAA34899." evidence="6" ref="1">
    <original>S</original>
    <variation>T</variation>
    <location>
        <position position="231"/>
    </location>
</feature>
<proteinExistence type="evidence at protein level"/>
<evidence type="ECO:0000250" key="1"/>
<evidence type="ECO:0000250" key="2">
    <source>
        <dbReference type="UniProtKB" id="P26570"/>
    </source>
</evidence>
<evidence type="ECO:0000255" key="3"/>
<evidence type="ECO:0000256" key="4">
    <source>
        <dbReference type="SAM" id="MobiDB-lite"/>
    </source>
</evidence>
<evidence type="ECO:0000269" key="5">
    <source>
    </source>
</evidence>
<evidence type="ECO:0000305" key="6"/>
<evidence type="ECO:0007744" key="7">
    <source>
    </source>
</evidence>
<evidence type="ECO:0007744" key="8">
    <source>
    </source>
</evidence>
<accession>P33329</accession>
<accession>D6VT63</accession>
<gene>
    <name type="primary">PPZ2</name>
    <name type="ordered locus">YDR436W</name>
    <name type="ORF">D9461.22</name>
</gene>
<keyword id="KW-0378">Hydrolase</keyword>
<keyword id="KW-0449">Lipoprotein</keyword>
<keyword id="KW-0464">Manganese</keyword>
<keyword id="KW-0479">Metal-binding</keyword>
<keyword id="KW-0519">Myristate</keyword>
<keyword id="KW-0597">Phosphoprotein</keyword>
<keyword id="KW-0904">Protein phosphatase</keyword>
<keyword id="KW-1185">Reference proteome</keyword>
<comment type="function">
    <text>Essential for the maintenance of cell size and integrity in response to osmotic stress.</text>
</comment>
<comment type="catalytic activity">
    <reaction>
        <text>O-phospho-L-seryl-[protein] + H2O = L-seryl-[protein] + phosphate</text>
        <dbReference type="Rhea" id="RHEA:20629"/>
        <dbReference type="Rhea" id="RHEA-COMP:9863"/>
        <dbReference type="Rhea" id="RHEA-COMP:11604"/>
        <dbReference type="ChEBI" id="CHEBI:15377"/>
        <dbReference type="ChEBI" id="CHEBI:29999"/>
        <dbReference type="ChEBI" id="CHEBI:43474"/>
        <dbReference type="ChEBI" id="CHEBI:83421"/>
        <dbReference type="EC" id="3.1.3.16"/>
    </reaction>
</comment>
<comment type="catalytic activity">
    <reaction>
        <text>O-phospho-L-threonyl-[protein] + H2O = L-threonyl-[protein] + phosphate</text>
        <dbReference type="Rhea" id="RHEA:47004"/>
        <dbReference type="Rhea" id="RHEA-COMP:11060"/>
        <dbReference type="Rhea" id="RHEA-COMP:11605"/>
        <dbReference type="ChEBI" id="CHEBI:15377"/>
        <dbReference type="ChEBI" id="CHEBI:30013"/>
        <dbReference type="ChEBI" id="CHEBI:43474"/>
        <dbReference type="ChEBI" id="CHEBI:61977"/>
        <dbReference type="EC" id="3.1.3.16"/>
    </reaction>
</comment>
<comment type="cofactor">
    <cofactor evidence="1">
        <name>Mn(2+)</name>
        <dbReference type="ChEBI" id="CHEBI:29035"/>
    </cofactor>
    <text evidence="1">Binds 2 manganese ions per subunit.</text>
</comment>
<comment type="interaction">
    <interactant intactId="EBI-13815">
        <id>P33329</id>
    </interactant>
    <interactant intactId="EBI-26778">
        <id>P36076</id>
        <label>CAB3</label>
    </interactant>
    <organismsDiffer>false</organismsDiffer>
    <experiments>5</experiments>
</comment>
<comment type="interaction">
    <interactant intactId="EBI-13815">
        <id>P33329</id>
    </interactant>
    <interactant intactId="EBI-13807">
        <id>P26570</id>
        <label>PPZ1</label>
    </interactant>
    <organismsDiffer>false</organismsDiffer>
    <experiments>3</experiments>
</comment>
<comment type="interaction">
    <interactant intactId="EBI-13815">
        <id>P33329</id>
    </interactant>
    <interactant intactId="EBI-17250">
        <id>P36024</id>
        <label>SIS2</label>
    </interactant>
    <organismsDiffer>false</organismsDiffer>
    <experiments>3</experiments>
</comment>
<comment type="miscellaneous">
    <text evidence="5">Present with 189 molecules/cell in log phase SD medium.</text>
</comment>
<comment type="similarity">
    <text evidence="6">Belongs to the PPP phosphatase family. PP-Z subfamily.</text>
</comment>
<sequence>MGNSGSKQHTKHNSKKDDHDGDRKKTLDLPPLTKSDTTHSLKSSRSLRSLRSKRSEASLASNVQAQTQPLSRRSSTLGNGNRNHRRSNNAPITPPNNHYLTSHPSSSRRLSSSSRRSSMGNNNNSELPPSMIQMEPKSPILKNSTSMHSTSSFNSYENALTDDDDDRGDDGGESPSMAKVTRINTSSSADRGSKRTPLRRHNSLQPEKGVTGFSSTSSKLRRRSDNTLPASYPLNAEAGGNGSDYFSNRSNSHASSRKSSFGSTGNTAYSTPLHSPALRKMSSRDNDDSGDNVNGRGTSPIPNLNIDKPSPSASSASKREYLSAYPTLAHRDSSSSLSPRGKGQRSSSSSSSSQRIYVSPPSPTGDFVHGSCADGDNGSRTNTMVEMKRKKPVRPVDIDEIIQRLLDAGYAAKRTKNVCLKNSEIIQICHKARELFLAQPALLELSPSVKIVGDVHGQYADLLRLFTKCGFPPMANYLFLGDYVDRGKQSLETILLLLCYKIKYPENFFLLRGNHECANVTRVYGFYDECKRRCNIKIWKTFVDTFNTLPLAAIVTGKIFCVHGGLSPVLNSMDEIRHVSRPTDVPDFGLINDLLWSDPTDSSNEWEDNERGVSFCYNKVAINKFLNKFGFDLVCRAHMVVEDGYEFFNDRSLVTVFSAPNYCGEFDNWGAVMTVSEGLLCSFELLDPLDSTALKQVMKKGRQERKLANR</sequence>
<name>PPZ2_YEAST</name>
<dbReference type="EC" id="3.1.3.16"/>
<dbReference type="EMBL" id="X74136">
    <property type="protein sequence ID" value="CAA52233.1"/>
    <property type="molecule type" value="Genomic_DNA"/>
</dbReference>
<dbReference type="EMBL" id="L10241">
    <property type="protein sequence ID" value="AAA34899.1"/>
    <property type="molecule type" value="Genomic_DNA"/>
</dbReference>
<dbReference type="EMBL" id="U33007">
    <property type="protein sequence ID" value="AAB64859.1"/>
    <property type="molecule type" value="Genomic_DNA"/>
</dbReference>
<dbReference type="EMBL" id="BK006938">
    <property type="protein sequence ID" value="DAA12273.1"/>
    <property type="molecule type" value="Genomic_DNA"/>
</dbReference>
<dbReference type="PIR" id="S35674">
    <property type="entry name" value="S35674"/>
</dbReference>
<dbReference type="RefSeq" id="NP_010724.1">
    <property type="nucleotide sequence ID" value="NM_001180744.1"/>
</dbReference>
<dbReference type="SMR" id="P33329"/>
<dbReference type="BioGRID" id="32492">
    <property type="interactions" value="89"/>
</dbReference>
<dbReference type="DIP" id="DIP-6355N"/>
<dbReference type="FunCoup" id="P33329">
    <property type="interactions" value="262"/>
</dbReference>
<dbReference type="IntAct" id="P33329">
    <property type="interactions" value="18"/>
</dbReference>
<dbReference type="MINT" id="P33329"/>
<dbReference type="STRING" id="4932.YDR436W"/>
<dbReference type="GlyGen" id="P33329">
    <property type="glycosylation" value="1 site"/>
</dbReference>
<dbReference type="iPTMnet" id="P33329"/>
<dbReference type="PaxDb" id="4932-YDR436W"/>
<dbReference type="PeptideAtlas" id="P33329"/>
<dbReference type="EnsemblFungi" id="YDR436W_mRNA">
    <property type="protein sequence ID" value="YDR436W"/>
    <property type="gene ID" value="YDR436W"/>
</dbReference>
<dbReference type="GeneID" id="852046"/>
<dbReference type="KEGG" id="sce:YDR436W"/>
<dbReference type="AGR" id="SGD:S000002844"/>
<dbReference type="SGD" id="S000002844">
    <property type="gene designation" value="PPZ2"/>
</dbReference>
<dbReference type="VEuPathDB" id="FungiDB:YDR436W"/>
<dbReference type="eggNOG" id="KOG0374">
    <property type="taxonomic scope" value="Eukaryota"/>
</dbReference>
<dbReference type="HOGENOM" id="CLU_004962_3_0_1"/>
<dbReference type="InParanoid" id="P33329"/>
<dbReference type="OMA" id="SFQYYEN"/>
<dbReference type="OrthoDB" id="1930084at2759"/>
<dbReference type="BioCyc" id="YEAST:YDR436W-MONOMER"/>
<dbReference type="BioGRID-ORCS" id="852046">
    <property type="hits" value="3 hits in 10 CRISPR screens"/>
</dbReference>
<dbReference type="PRO" id="PR:P33329"/>
<dbReference type="Proteomes" id="UP000002311">
    <property type="component" value="Chromosome IV"/>
</dbReference>
<dbReference type="RNAct" id="P33329">
    <property type="molecule type" value="protein"/>
</dbReference>
<dbReference type="GO" id="GO:0005737">
    <property type="term" value="C:cytoplasm"/>
    <property type="evidence" value="ECO:0000318"/>
    <property type="project" value="GO_Central"/>
</dbReference>
<dbReference type="GO" id="GO:0005634">
    <property type="term" value="C:nucleus"/>
    <property type="evidence" value="ECO:0000318"/>
    <property type="project" value="GO_Central"/>
</dbReference>
<dbReference type="GO" id="GO:0046872">
    <property type="term" value="F:metal ion binding"/>
    <property type="evidence" value="ECO:0007669"/>
    <property type="project" value="UniProtKB-KW"/>
</dbReference>
<dbReference type="GO" id="GO:0004722">
    <property type="term" value="F:protein serine/threonine phosphatase activity"/>
    <property type="evidence" value="ECO:0000250"/>
    <property type="project" value="SGD"/>
</dbReference>
<dbReference type="GO" id="GO:0006883">
    <property type="term" value="P:intracellular sodium ion homeostasis"/>
    <property type="evidence" value="ECO:0000315"/>
    <property type="project" value="SGD"/>
</dbReference>
<dbReference type="CDD" id="cd07414">
    <property type="entry name" value="MPP_PP1_PPKL"/>
    <property type="match status" value="1"/>
</dbReference>
<dbReference type="FunFam" id="3.60.21.10:FF:000006">
    <property type="entry name" value="Serine/threonine-protein phosphatase"/>
    <property type="match status" value="1"/>
</dbReference>
<dbReference type="Gene3D" id="3.60.21.10">
    <property type="match status" value="1"/>
</dbReference>
<dbReference type="InterPro" id="IPR004843">
    <property type="entry name" value="Calcineurin-like_PHP_ApaH"/>
</dbReference>
<dbReference type="InterPro" id="IPR029052">
    <property type="entry name" value="Metallo-depent_PP-like"/>
</dbReference>
<dbReference type="InterPro" id="IPR050341">
    <property type="entry name" value="PP1_catalytic_subunit"/>
</dbReference>
<dbReference type="InterPro" id="IPR011159">
    <property type="entry name" value="PPPtase_PPZ/Ppq1"/>
</dbReference>
<dbReference type="InterPro" id="IPR006186">
    <property type="entry name" value="Ser/Thr-sp_prot-phosphatase"/>
</dbReference>
<dbReference type="InterPro" id="IPR031675">
    <property type="entry name" value="STPPase_N"/>
</dbReference>
<dbReference type="PANTHER" id="PTHR11668">
    <property type="entry name" value="SERINE/THREONINE PROTEIN PHOSPHATASE"/>
    <property type="match status" value="1"/>
</dbReference>
<dbReference type="PANTHER" id="PTHR11668:SF484">
    <property type="entry name" value="SERINE_THREONINE-PROTEIN PHOSPHATASE PP-Z1-RELATED"/>
    <property type="match status" value="1"/>
</dbReference>
<dbReference type="Pfam" id="PF00149">
    <property type="entry name" value="Metallophos"/>
    <property type="match status" value="1"/>
</dbReference>
<dbReference type="Pfam" id="PF16891">
    <property type="entry name" value="STPPase_N"/>
    <property type="match status" value="1"/>
</dbReference>
<dbReference type="PIRSF" id="PIRSF000909">
    <property type="entry name" value="PPPtase_PPZ"/>
    <property type="match status" value="1"/>
</dbReference>
<dbReference type="PRINTS" id="PR00114">
    <property type="entry name" value="STPHPHTASE"/>
</dbReference>
<dbReference type="SMART" id="SM00156">
    <property type="entry name" value="PP2Ac"/>
    <property type="match status" value="1"/>
</dbReference>
<dbReference type="SUPFAM" id="SSF56300">
    <property type="entry name" value="Metallo-dependent phosphatases"/>
    <property type="match status" value="1"/>
</dbReference>
<dbReference type="PROSITE" id="PS00125">
    <property type="entry name" value="SER_THR_PHOSPHATASE"/>
    <property type="match status" value="1"/>
</dbReference>
<reference key="1">
    <citation type="journal article" date="1993" name="Mol. Cell. Biol.">
        <title>A pair of functionally redundant yeast genes (PPZ1 and PPZ2) encoding type 1-related protein phosphatases function within the PKC1-mediated pathway.</title>
        <authorList>
            <person name="Lee K.S."/>
            <person name="Hines L.K."/>
            <person name="Levin D.E."/>
        </authorList>
    </citation>
    <scope>NUCLEOTIDE SEQUENCE [GENOMIC DNA]</scope>
    <source>
        <strain>ATCC 204508 / S288c</strain>
    </source>
</reference>
<reference key="2">
    <citation type="journal article" date="1993" name="Eur. J. Biochem.">
        <title>Both isoforms of protein phosphatase Z are essential for the maintenance of cell size and integrity in Saccharomyces cerevisiae in response to osmotic stress.</title>
        <authorList>
            <person name="Hughes V."/>
            <person name="Mueller A."/>
            <person name="Stark M.J.R."/>
            <person name="Cohen P.T.W."/>
        </authorList>
    </citation>
    <scope>NUCLEOTIDE SEQUENCE [GENOMIC DNA]</scope>
    <source>
        <strain>AY926</strain>
    </source>
</reference>
<reference key="3">
    <citation type="journal article" date="1997" name="Nature">
        <title>The nucleotide sequence of Saccharomyces cerevisiae chromosome IV.</title>
        <authorList>
            <person name="Jacq C."/>
            <person name="Alt-Moerbe J."/>
            <person name="Andre B."/>
            <person name="Arnold W."/>
            <person name="Bahr A."/>
            <person name="Ballesta J.P.G."/>
            <person name="Bargues M."/>
            <person name="Baron L."/>
            <person name="Becker A."/>
            <person name="Biteau N."/>
            <person name="Bloecker H."/>
            <person name="Blugeon C."/>
            <person name="Boskovic J."/>
            <person name="Brandt P."/>
            <person name="Brueckner M."/>
            <person name="Buitrago M.J."/>
            <person name="Coster F."/>
            <person name="Delaveau T."/>
            <person name="del Rey F."/>
            <person name="Dujon B."/>
            <person name="Eide L.G."/>
            <person name="Garcia-Cantalejo J.M."/>
            <person name="Goffeau A."/>
            <person name="Gomez-Peris A."/>
            <person name="Granotier C."/>
            <person name="Hanemann V."/>
            <person name="Hankeln T."/>
            <person name="Hoheisel J.D."/>
            <person name="Jaeger W."/>
            <person name="Jimenez A."/>
            <person name="Jonniaux J.-L."/>
            <person name="Kraemer C."/>
            <person name="Kuester H."/>
            <person name="Laamanen P."/>
            <person name="Legros Y."/>
            <person name="Louis E.J."/>
            <person name="Moeller-Rieker S."/>
            <person name="Monnet A."/>
            <person name="Moro M."/>
            <person name="Mueller-Auer S."/>
            <person name="Nussbaumer B."/>
            <person name="Paricio N."/>
            <person name="Paulin L."/>
            <person name="Perea J."/>
            <person name="Perez-Alonso M."/>
            <person name="Perez-Ortin J.E."/>
            <person name="Pohl T.M."/>
            <person name="Prydz H."/>
            <person name="Purnelle B."/>
            <person name="Rasmussen S.W."/>
            <person name="Remacha M.A."/>
            <person name="Revuelta J.L."/>
            <person name="Rieger M."/>
            <person name="Salom D."/>
            <person name="Saluz H.P."/>
            <person name="Saiz J.E."/>
            <person name="Saren A.-M."/>
            <person name="Schaefer M."/>
            <person name="Scharfe M."/>
            <person name="Schmidt E.R."/>
            <person name="Schneider C."/>
            <person name="Scholler P."/>
            <person name="Schwarz S."/>
            <person name="Soler-Mira A."/>
            <person name="Urrestarazu L.A."/>
            <person name="Verhasselt P."/>
            <person name="Vissers S."/>
            <person name="Voet M."/>
            <person name="Volckaert G."/>
            <person name="Wagner G."/>
            <person name="Wambutt R."/>
            <person name="Wedler E."/>
            <person name="Wedler H."/>
            <person name="Woelfl S."/>
            <person name="Harris D.E."/>
            <person name="Bowman S."/>
            <person name="Brown D."/>
            <person name="Churcher C.M."/>
            <person name="Connor R."/>
            <person name="Dedman K."/>
            <person name="Gentles S."/>
            <person name="Hamlin N."/>
            <person name="Hunt S."/>
            <person name="Jones L."/>
            <person name="McDonald S."/>
            <person name="Murphy L.D."/>
            <person name="Niblett D."/>
            <person name="Odell C."/>
            <person name="Oliver K."/>
            <person name="Rajandream M.A."/>
            <person name="Richards C."/>
            <person name="Shore L."/>
            <person name="Walsh S.V."/>
            <person name="Barrell B.G."/>
            <person name="Dietrich F.S."/>
            <person name="Mulligan J.T."/>
            <person name="Allen E."/>
            <person name="Araujo R."/>
            <person name="Aviles E."/>
            <person name="Berno A."/>
            <person name="Carpenter J."/>
            <person name="Chen E."/>
            <person name="Cherry J.M."/>
            <person name="Chung E."/>
            <person name="Duncan M."/>
            <person name="Hunicke-Smith S."/>
            <person name="Hyman R.W."/>
            <person name="Komp C."/>
            <person name="Lashkari D."/>
            <person name="Lew H."/>
            <person name="Lin D."/>
            <person name="Mosedale D."/>
            <person name="Nakahara K."/>
            <person name="Namath A."/>
            <person name="Oefner P."/>
            <person name="Oh C."/>
            <person name="Petel F.X."/>
            <person name="Roberts D."/>
            <person name="Schramm S."/>
            <person name="Schroeder M."/>
            <person name="Shogren T."/>
            <person name="Shroff N."/>
            <person name="Winant A."/>
            <person name="Yelton M.A."/>
            <person name="Botstein D."/>
            <person name="Davis R.W."/>
            <person name="Johnston M."/>
            <person name="Andrews S."/>
            <person name="Brinkman R."/>
            <person name="Cooper J."/>
            <person name="Ding H."/>
            <person name="Du Z."/>
            <person name="Favello A."/>
            <person name="Fulton L."/>
            <person name="Gattung S."/>
            <person name="Greco T."/>
            <person name="Hallsworth K."/>
            <person name="Hawkins J."/>
            <person name="Hillier L.W."/>
            <person name="Jier M."/>
            <person name="Johnson D."/>
            <person name="Johnston L."/>
            <person name="Kirsten J."/>
            <person name="Kucaba T."/>
            <person name="Langston Y."/>
            <person name="Latreille P."/>
            <person name="Le T."/>
            <person name="Mardis E."/>
            <person name="Menezes S."/>
            <person name="Miller N."/>
            <person name="Nhan M."/>
            <person name="Pauley A."/>
            <person name="Peluso D."/>
            <person name="Rifkin L."/>
            <person name="Riles L."/>
            <person name="Taich A."/>
            <person name="Trevaskis E."/>
            <person name="Vignati D."/>
            <person name="Wilcox L."/>
            <person name="Wohldman P."/>
            <person name="Vaudin M."/>
            <person name="Wilson R."/>
            <person name="Waterston R."/>
            <person name="Albermann K."/>
            <person name="Hani J."/>
            <person name="Heumann K."/>
            <person name="Kleine K."/>
            <person name="Mewes H.-W."/>
            <person name="Zollner A."/>
            <person name="Zaccaria P."/>
        </authorList>
    </citation>
    <scope>NUCLEOTIDE SEQUENCE [LARGE SCALE GENOMIC DNA]</scope>
    <source>
        <strain>ATCC 204508 / S288c</strain>
    </source>
</reference>
<reference key="4">
    <citation type="journal article" date="2014" name="G3 (Bethesda)">
        <title>The reference genome sequence of Saccharomyces cerevisiae: Then and now.</title>
        <authorList>
            <person name="Engel S.R."/>
            <person name="Dietrich F.S."/>
            <person name="Fisk D.G."/>
            <person name="Binkley G."/>
            <person name="Balakrishnan R."/>
            <person name="Costanzo M.C."/>
            <person name="Dwight S.S."/>
            <person name="Hitz B.C."/>
            <person name="Karra K."/>
            <person name="Nash R.S."/>
            <person name="Weng S."/>
            <person name="Wong E.D."/>
            <person name="Lloyd P."/>
            <person name="Skrzypek M.S."/>
            <person name="Miyasato S.R."/>
            <person name="Simison M."/>
            <person name="Cherry J.M."/>
        </authorList>
    </citation>
    <scope>GENOME REANNOTATION</scope>
    <source>
        <strain>ATCC 204508 / S288c</strain>
    </source>
</reference>
<reference key="5">
    <citation type="journal article" date="1991" name="Biochim. Biophys. Acta">
        <title>Protein phosphatase 2Bw and protein phosphatase Z are Saccharomyces cerevisiae enzymes.</title>
        <authorList>
            <person name="Da Cruz e Silva E.F."/>
            <person name="Hughes V."/>
            <person name="McDonald P."/>
            <person name="Stark M.J.R."/>
            <person name="Cohen P.T.W."/>
        </authorList>
    </citation>
    <scope>NUCLEOTIDE SEQUENCE [GENOMIC DNA] OF 424-645</scope>
</reference>
<reference key="6">
    <citation type="journal article" date="2003" name="Nature">
        <title>Global analysis of protein expression in yeast.</title>
        <authorList>
            <person name="Ghaemmaghami S."/>
            <person name="Huh W.-K."/>
            <person name="Bower K."/>
            <person name="Howson R.W."/>
            <person name="Belle A."/>
            <person name="Dephoure N."/>
            <person name="O'Shea E.K."/>
            <person name="Weissman J.S."/>
        </authorList>
    </citation>
    <scope>LEVEL OF PROTEIN EXPRESSION [LARGE SCALE ANALYSIS]</scope>
</reference>
<reference key="7">
    <citation type="journal article" date="2007" name="J. Proteome Res.">
        <title>Large-scale phosphorylation analysis of alpha-factor-arrested Saccharomyces cerevisiae.</title>
        <authorList>
            <person name="Li X."/>
            <person name="Gerber S.A."/>
            <person name="Rudner A.D."/>
            <person name="Beausoleil S.A."/>
            <person name="Haas W."/>
            <person name="Villen J."/>
            <person name="Elias J.E."/>
            <person name="Gygi S.P."/>
        </authorList>
    </citation>
    <scope>IDENTIFICATION BY MASS SPECTROMETRY [LARGE SCALE ANALYSIS]</scope>
    <source>
        <strain>ADR376</strain>
    </source>
</reference>
<reference key="8">
    <citation type="journal article" date="2007" name="Proc. Natl. Acad. Sci. U.S.A.">
        <title>Analysis of phosphorylation sites on proteins from Saccharomyces cerevisiae by electron transfer dissociation (ETD) mass spectrometry.</title>
        <authorList>
            <person name="Chi A."/>
            <person name="Huttenhower C."/>
            <person name="Geer L.Y."/>
            <person name="Coon J.J."/>
            <person name="Syka J.E.P."/>
            <person name="Bai D.L."/>
            <person name="Shabanowitz J."/>
            <person name="Burke D.J."/>
            <person name="Troyanskaya O.G."/>
            <person name="Hunt D.F."/>
        </authorList>
    </citation>
    <scope>PHOSPHORYLATION [LARGE SCALE ANALYSIS] AT SER-203</scope>
    <scope>IDENTIFICATION BY MASS SPECTROMETRY [LARGE SCALE ANALYSIS]</scope>
</reference>
<reference key="9">
    <citation type="journal article" date="2008" name="Mol. Cell. Proteomics">
        <title>A multidimensional chromatography technology for in-depth phosphoproteome analysis.</title>
        <authorList>
            <person name="Albuquerque C.P."/>
            <person name="Smolka M.B."/>
            <person name="Payne S.H."/>
            <person name="Bafna V."/>
            <person name="Eng J."/>
            <person name="Zhou H."/>
        </authorList>
    </citation>
    <scope>IDENTIFICATION BY MASS SPECTROMETRY [LARGE SCALE ANALYSIS]</scope>
</reference>
<reference key="10">
    <citation type="journal article" date="2009" name="Science">
        <title>Global analysis of Cdk1 substrate phosphorylation sites provides insights into evolution.</title>
        <authorList>
            <person name="Holt L.J."/>
            <person name="Tuch B.B."/>
            <person name="Villen J."/>
            <person name="Johnson A.D."/>
            <person name="Gygi S.P."/>
            <person name="Morgan D.O."/>
        </authorList>
    </citation>
    <scope>PHOSPHORYLATION [LARGE SCALE ANALYSIS] AT SER-71; SER-224 AND SER-310</scope>
    <scope>IDENTIFICATION BY MASS SPECTROMETRY [LARGE SCALE ANALYSIS]</scope>
</reference>
<organism>
    <name type="scientific">Saccharomyces cerevisiae (strain ATCC 204508 / S288c)</name>
    <name type="common">Baker's yeast</name>
    <dbReference type="NCBI Taxonomy" id="559292"/>
    <lineage>
        <taxon>Eukaryota</taxon>
        <taxon>Fungi</taxon>
        <taxon>Dikarya</taxon>
        <taxon>Ascomycota</taxon>
        <taxon>Saccharomycotina</taxon>
        <taxon>Saccharomycetes</taxon>
        <taxon>Saccharomycetales</taxon>
        <taxon>Saccharomycetaceae</taxon>
        <taxon>Saccharomyces</taxon>
    </lineage>
</organism>
<protein>
    <recommendedName>
        <fullName>Serine/threonine-protein phosphatase PP-Z2</fullName>
        <ecNumber>3.1.3.16</ecNumber>
    </recommendedName>
</protein>